<gene>
    <name type="primary">TY1A-BL</name>
    <name type="synonym">YBLWTy1-1 GAG</name>
    <name type="ordered locus">YBL005W-A</name>
    <name type="ORF">YBL004W-B</name>
    <name type="ORF">YBL0324</name>
</gene>
<feature type="chain" id="PRO_0000278990" description="Transposon Ty1-BL Gag polyprotein">
    <location>
        <begin position="1"/>
        <end position="440"/>
    </location>
</feature>
<feature type="chain" id="PRO_0000278991" description="Capsid protein" evidence="1">
    <location>
        <begin position="1"/>
        <end position="401"/>
    </location>
</feature>
<feature type="peptide" id="PRO_0000278992" description="Gag-p4" evidence="1">
    <location>
        <begin position="402"/>
        <end position="440"/>
    </location>
</feature>
<feature type="region of interest" description="Disordered" evidence="2">
    <location>
        <begin position="20"/>
        <end position="84"/>
    </location>
</feature>
<feature type="region of interest" description="Disordered" evidence="2">
    <location>
        <begin position="137"/>
        <end position="173"/>
    </location>
</feature>
<feature type="region of interest" description="RNA-binding" evidence="1">
    <location>
        <begin position="299"/>
        <end position="401"/>
    </location>
</feature>
<feature type="region of interest" description="Disordered" evidence="2">
    <location>
        <begin position="350"/>
        <end position="424"/>
    </location>
</feature>
<feature type="compositionally biased region" description="Polar residues" evidence="2">
    <location>
        <begin position="20"/>
        <end position="31"/>
    </location>
</feature>
<feature type="compositionally biased region" description="Polar residues" evidence="2">
    <location>
        <begin position="46"/>
        <end position="55"/>
    </location>
</feature>
<feature type="compositionally biased region" description="Polar residues" evidence="2">
    <location>
        <begin position="137"/>
        <end position="168"/>
    </location>
</feature>
<feature type="compositionally biased region" description="Basic and acidic residues" evidence="2">
    <location>
        <begin position="363"/>
        <end position="372"/>
    </location>
</feature>
<feature type="compositionally biased region" description="Polar residues" evidence="2">
    <location>
        <begin position="373"/>
        <end position="411"/>
    </location>
</feature>
<feature type="site" description="Cleavage; by Ty1 protease" evidence="1">
    <location>
        <begin position="401"/>
        <end position="402"/>
    </location>
</feature>
<accession>Q12266</accession>
<accession>D6VPZ7</accession>
<proteinExistence type="evidence at protein level"/>
<evidence type="ECO:0000250" key="1"/>
<evidence type="ECO:0000256" key="2">
    <source>
        <dbReference type="SAM" id="MobiDB-lite"/>
    </source>
</evidence>
<evidence type="ECO:0000269" key="3">
    <source>
    </source>
</evidence>
<name>YB11A_YEAST</name>
<organism>
    <name type="scientific">Saccharomyces cerevisiae (strain ATCC 204508 / S288c)</name>
    <name type="common">Baker's yeast</name>
    <dbReference type="NCBI Taxonomy" id="559292"/>
    <lineage>
        <taxon>Eukaryota</taxon>
        <taxon>Fungi</taxon>
        <taxon>Dikarya</taxon>
        <taxon>Ascomycota</taxon>
        <taxon>Saccharomycotina</taxon>
        <taxon>Saccharomycetes</taxon>
        <taxon>Saccharomycetales</taxon>
        <taxon>Saccharomycetaceae</taxon>
        <taxon>Saccharomyces</taxon>
    </lineage>
</organism>
<sequence>MESQQLSQHSPIFHGSACASVTSKEVQTTQDPLDISASKTEECEKVSTQANSQQPTTPPSSAVPENHHHASPQAAQVPLPQNGPYPQQRMMNTQQANISGWPVYGHPSLMPYPPYQMSPMYAPPGAQSQFTQYPQYVGTHLNTPSPESGNSFPDSSSAKSNMTSTNQHVRPPPILTSPNDFLNWVKIYIKFLQNSNLGDIIPTATRKAVRQMTDDELTFLCHTFQLFAPSQFLPPWVKDILSVDYTDIMKILSKSINKMQSDTQEVNDITTLATLHYNGSTPADAFEAEVTNILDRLNNNGIPINNKVACQFIMRGLSGEYKFLPYARHRCIHMTVADLFSDIHSMYEEQQESKRNKSTYRRSPSDEKKDSRTYTNTTKPKSITRNSQKPNNSQSRTARAHNVSTFNNSPGPDNDLIRGSTTEPIQLKNTHDLHLRPGTY</sequence>
<protein>
    <recommendedName>
        <fullName>Transposon Ty1-BL Gag polyprotein</fullName>
    </recommendedName>
    <alternativeName>
        <fullName>Gag-p49</fullName>
    </alternativeName>
    <alternativeName>
        <fullName>Transposon Ty1 protein A</fullName>
        <shortName>TY1A</shortName>
        <shortName>TYA</shortName>
    </alternativeName>
    <alternativeName>
        <fullName>p58</fullName>
    </alternativeName>
    <component>
        <recommendedName>
            <fullName>Capsid protein</fullName>
            <shortName>CA</shortName>
        </recommendedName>
        <alternativeName>
            <fullName>Gag-p45</fullName>
        </alternativeName>
        <alternativeName>
            <fullName>p54</fullName>
        </alternativeName>
    </component>
    <component>
        <recommendedName>
            <fullName>Gag-p4</fullName>
        </recommendedName>
    </component>
</protein>
<reference key="1">
    <citation type="journal article" date="1994" name="EMBO J.">
        <title>Complete DNA sequence of yeast chromosome II.</title>
        <authorList>
            <person name="Feldmann H."/>
            <person name="Aigle M."/>
            <person name="Aljinovic G."/>
            <person name="Andre B."/>
            <person name="Baclet M.C."/>
            <person name="Barthe C."/>
            <person name="Baur A."/>
            <person name="Becam A.-M."/>
            <person name="Biteau N."/>
            <person name="Boles E."/>
            <person name="Brandt T."/>
            <person name="Brendel M."/>
            <person name="Brueckner M."/>
            <person name="Bussereau F."/>
            <person name="Christiansen C."/>
            <person name="Contreras R."/>
            <person name="Crouzet M."/>
            <person name="Cziepluch C."/>
            <person name="Demolis N."/>
            <person name="Delaveau T."/>
            <person name="Doignon F."/>
            <person name="Domdey H."/>
            <person name="Duesterhus S."/>
            <person name="Dubois E."/>
            <person name="Dujon B."/>
            <person name="El Bakkoury M."/>
            <person name="Entian K.-D."/>
            <person name="Feuermann M."/>
            <person name="Fiers W."/>
            <person name="Fobo G.M."/>
            <person name="Fritz C."/>
            <person name="Gassenhuber J."/>
            <person name="Glansdorff N."/>
            <person name="Goffeau A."/>
            <person name="Grivell L.A."/>
            <person name="de Haan M."/>
            <person name="Hein C."/>
            <person name="Herbert C.J."/>
            <person name="Hollenberg C.P."/>
            <person name="Holmstroem K."/>
            <person name="Jacq C."/>
            <person name="Jacquet M."/>
            <person name="Jauniaux J.-C."/>
            <person name="Jonniaux J.-L."/>
            <person name="Kallesoee T."/>
            <person name="Kiesau P."/>
            <person name="Kirchrath L."/>
            <person name="Koetter P."/>
            <person name="Korol S."/>
            <person name="Liebl S."/>
            <person name="Logghe M."/>
            <person name="Lohan A.J.E."/>
            <person name="Louis E.J."/>
            <person name="Li Z.Y."/>
            <person name="Maat M.J."/>
            <person name="Mallet L."/>
            <person name="Mannhaupt G."/>
            <person name="Messenguy F."/>
            <person name="Miosga T."/>
            <person name="Molemans F."/>
            <person name="Mueller S."/>
            <person name="Nasr F."/>
            <person name="Obermaier B."/>
            <person name="Perea J."/>
            <person name="Pierard A."/>
            <person name="Piravandi E."/>
            <person name="Pohl F.M."/>
            <person name="Pohl T.M."/>
            <person name="Potier S."/>
            <person name="Proft M."/>
            <person name="Purnelle B."/>
            <person name="Ramezani Rad M."/>
            <person name="Rieger M."/>
            <person name="Rose M."/>
            <person name="Schaaff-Gerstenschlaeger I."/>
            <person name="Scherens B."/>
            <person name="Schwarzlose C."/>
            <person name="Skala J."/>
            <person name="Slonimski P.P."/>
            <person name="Smits P.H.M."/>
            <person name="Souciet J.-L."/>
            <person name="Steensma H.Y."/>
            <person name="Stucka R."/>
            <person name="Urrestarazu L.A."/>
            <person name="van der Aart Q.J.M."/>
            <person name="Van Dyck L."/>
            <person name="Vassarotti A."/>
            <person name="Vetter I."/>
            <person name="Vierendeels F."/>
            <person name="Vissers S."/>
            <person name="Wagner G."/>
            <person name="de Wergifosse P."/>
            <person name="Wolfe K.H."/>
            <person name="Zagulski M."/>
            <person name="Zimmermann F.K."/>
            <person name="Mewes H.-W."/>
            <person name="Kleine K."/>
        </authorList>
    </citation>
    <scope>NUCLEOTIDE SEQUENCE [LARGE SCALE GENOMIC DNA]</scope>
    <source>
        <strain>ATCC 204508 / S288c</strain>
    </source>
</reference>
<reference key="2">
    <citation type="journal article" date="2014" name="G3 (Bethesda)">
        <title>The reference genome sequence of Saccharomyces cerevisiae: Then and now.</title>
        <authorList>
            <person name="Engel S.R."/>
            <person name="Dietrich F.S."/>
            <person name="Fisk D.G."/>
            <person name="Binkley G."/>
            <person name="Balakrishnan R."/>
            <person name="Costanzo M.C."/>
            <person name="Dwight S.S."/>
            <person name="Hitz B.C."/>
            <person name="Karra K."/>
            <person name="Nash R.S."/>
            <person name="Weng S."/>
            <person name="Wong E.D."/>
            <person name="Lloyd P."/>
            <person name="Skrzypek M.S."/>
            <person name="Miyasato S.R."/>
            <person name="Simison M."/>
            <person name="Cherry J.M."/>
        </authorList>
    </citation>
    <scope>GENOME REANNOTATION</scope>
    <source>
        <strain>ATCC 204508 / S288c</strain>
    </source>
</reference>
<reference key="3">
    <citation type="journal article" date="1998" name="Genome Res.">
        <title>Transposable elements and genome organization: a comprehensive survey of retrotransposons revealed by the complete Saccharomyces cerevisiae genome sequence.</title>
        <authorList>
            <person name="Kim J.M."/>
            <person name="Vanguri S."/>
            <person name="Boeke J.D."/>
            <person name="Gabriel A."/>
            <person name="Voytas D.F."/>
        </authorList>
    </citation>
    <scope>NOMENCLATURE</scope>
</reference>
<reference key="4">
    <citation type="journal article" date="2002" name="Mol. Cell. Biol.">
        <title>Differential effects of chromatin and Gcn4 on the 50-fold range of expression among individual yeast Ty1 retrotransposons.</title>
        <authorList>
            <person name="Morillon A."/>
            <person name="Benard L."/>
            <person name="Springer M."/>
            <person name="Lesage P."/>
        </authorList>
    </citation>
    <scope>INDUCTION</scope>
</reference>
<reference key="5">
    <citation type="journal article" date="2005" name="Cytogenet. Genome Res.">
        <title>Happy together: the life and times of Ty retrotransposons and their hosts.</title>
        <authorList>
            <person name="Lesage P."/>
            <person name="Todeschini A.L."/>
        </authorList>
    </citation>
    <scope>REVIEW</scope>
</reference>
<reference key="6">
    <citation type="journal article" date="2007" name="J. Proteome Res.">
        <title>Large-scale phosphorylation analysis of alpha-factor-arrested Saccharomyces cerevisiae.</title>
        <authorList>
            <person name="Li X."/>
            <person name="Gerber S.A."/>
            <person name="Rudner A.D."/>
            <person name="Beausoleil S.A."/>
            <person name="Haas W."/>
            <person name="Villen J."/>
            <person name="Elias J.E."/>
            <person name="Gygi S.P."/>
        </authorList>
    </citation>
    <scope>IDENTIFICATION BY MASS SPECTROMETRY [LARGE SCALE ANALYSIS]</scope>
    <source>
        <strain>ADR376</strain>
    </source>
</reference>
<reference key="7">
    <citation type="journal article" date="2008" name="Mol. Cell. Proteomics">
        <title>A multidimensional chromatography technology for in-depth phosphoproteome analysis.</title>
        <authorList>
            <person name="Albuquerque C.P."/>
            <person name="Smolka M.B."/>
            <person name="Payne S.H."/>
            <person name="Bafna V."/>
            <person name="Eng J."/>
            <person name="Zhou H."/>
        </authorList>
    </citation>
    <scope>IDENTIFICATION BY MASS SPECTROMETRY [LARGE SCALE ANALYSIS]</scope>
</reference>
<reference key="8">
    <citation type="journal article" date="2009" name="Science">
        <title>Global analysis of Cdk1 substrate phosphorylation sites provides insights into evolution.</title>
        <authorList>
            <person name="Holt L.J."/>
            <person name="Tuch B.B."/>
            <person name="Villen J."/>
            <person name="Johnson A.D."/>
            <person name="Gygi S.P."/>
            <person name="Morgan D.O."/>
        </authorList>
    </citation>
    <scope>IDENTIFICATION BY MASS SPECTROMETRY [LARGE SCALE ANALYSIS]</scope>
</reference>
<dbReference type="EMBL" id="Z35765">
    <property type="protein sequence ID" value="CAA84819.1"/>
    <property type="molecule type" value="Genomic_DNA"/>
</dbReference>
<dbReference type="EMBL" id="Z35766">
    <property type="protein sequence ID" value="CAA84823.1"/>
    <property type="molecule type" value="Genomic_DNA"/>
</dbReference>
<dbReference type="EMBL" id="BK006936">
    <property type="protein sequence ID" value="DAA07117.1"/>
    <property type="molecule type" value="Genomic_DNA"/>
</dbReference>
<dbReference type="PIR" id="S45737">
    <property type="entry name" value="S45737"/>
</dbReference>
<dbReference type="RefSeq" id="NP_009550.1">
    <molecule id="Q12266-1"/>
    <property type="nucleotide sequence ID" value="NM_001180047.1"/>
</dbReference>
<dbReference type="SMR" id="Q12266"/>
<dbReference type="BioGRID" id="32695">
    <property type="interactions" value="7"/>
</dbReference>
<dbReference type="FunCoup" id="Q12266">
    <property type="interactions" value="78"/>
</dbReference>
<dbReference type="IntAct" id="Q12266">
    <property type="interactions" value="2"/>
</dbReference>
<dbReference type="GlyGen" id="Q12266">
    <property type="glycosylation" value="1 site"/>
</dbReference>
<dbReference type="iPTMnet" id="Q12266"/>
<dbReference type="PaxDb" id="4932-YBL005W-A"/>
<dbReference type="PeptideAtlas" id="Q12266"/>
<dbReference type="GeneID" id="852279"/>
<dbReference type="KEGG" id="sce:YBL005W-A"/>
<dbReference type="AGR" id="SGD:S000002146"/>
<dbReference type="SGD" id="S000002146">
    <property type="gene designation" value="YBL005W-A"/>
</dbReference>
<dbReference type="VEuPathDB" id="FungiDB:YBL005W-A"/>
<dbReference type="eggNOG" id="KOG0017">
    <property type="taxonomic scope" value="Eukaryota"/>
</dbReference>
<dbReference type="HOGENOM" id="CLU_045291_1_0_1"/>
<dbReference type="InParanoid" id="Q12266"/>
<dbReference type="OrthoDB" id="5423336at2759"/>
<dbReference type="Proteomes" id="UP000002311">
    <property type="component" value="Chromosome II"/>
</dbReference>
<dbReference type="RNAct" id="Q12266">
    <property type="molecule type" value="protein"/>
</dbReference>
<dbReference type="GO" id="GO:0005737">
    <property type="term" value="C:cytoplasm"/>
    <property type="evidence" value="ECO:0007669"/>
    <property type="project" value="UniProtKB-SubCell"/>
</dbReference>
<dbReference type="GO" id="GO:0003723">
    <property type="term" value="F:RNA binding"/>
    <property type="evidence" value="ECO:0007669"/>
    <property type="project" value="UniProtKB-KW"/>
</dbReference>
<dbReference type="GO" id="GO:0075523">
    <property type="term" value="P:viral translational frameshifting"/>
    <property type="evidence" value="ECO:0007669"/>
    <property type="project" value="UniProtKB-KW"/>
</dbReference>
<dbReference type="InterPro" id="IPR015820">
    <property type="entry name" value="TYA"/>
</dbReference>
<dbReference type="Pfam" id="PF01021">
    <property type="entry name" value="TYA"/>
    <property type="match status" value="1"/>
</dbReference>
<keyword id="KW-0963">Cytoplasm</keyword>
<keyword id="KW-1185">Reference proteome</keyword>
<keyword id="KW-0688">Ribosomal frameshifting</keyword>
<keyword id="KW-0694">RNA-binding</keyword>
<keyword id="KW-0814">Transposable element</keyword>
<comment type="function">
    <text evidence="1">Capsid protein (CA) is the structural component of the virus-like particle (VLP), forming the shell that encapsulates the retrotransposons dimeric RNA genome. The particles are assembled from trimer-clustered units and there are holes in the capsid shells that allow for the diffusion of macromolecules. CA also has nucleocapsid-like chaperone activity, promoting primer tRNA(i)-Met annealing to the multipartite primer-binding site (PBS), dimerization of Ty1 RNA and initiation of reverse transcription (By similarity).</text>
</comment>
<comment type="subunit">
    <text evidence="1">Homotrimer.</text>
</comment>
<comment type="subcellular location">
    <subcellularLocation>
        <location evidence="1">Cytoplasm</location>
    </subcellularLocation>
</comment>
<comment type="alternative products">
    <event type="ribosomal frameshifting"/>
    <isoform>
        <id>Q12266-1</id>
        <name>Transposon Ty1-BL Gag polyprotein</name>
        <sequence type="displayed"/>
    </isoform>
    <isoform>
        <id>Q12490-1</id>
        <name>Transposon Ty1-BL Gag-Pol polyprotein</name>
        <sequence type="external"/>
    </isoform>
    <text evidence="1">The Gag-Pol polyprotein is generated by a +1 ribosomal frameshift. The ratio of Gag:Gag-Pol varies between 20:1 and 5:1 (By similarity).</text>
</comment>
<comment type="induction">
    <text evidence="3">Ty1-BL is a highly expressed element. Induced under amino acid starvation conditions by GCN4.</text>
</comment>
<comment type="domain">
    <text evidence="1">The C-terminal RNA-binding region of CA is sufficient for all its nucleocapsid-like chaperone activities.</text>
</comment>
<comment type="miscellaneous">
    <text>Retrotransposons are mobile genetic entities that are able to replicate via an RNA intermediate and a reverse transcription step. In contrast to retroviruses, retrotransposons are non-infectious, lack an envelope and remain intracellular. Ty1 retrotransposons belong to the copia elements (pseudoviridae).</text>
</comment>
<comment type="miscellaneous">
    <molecule>Isoform Transposon Ty1-BL Gag polyprotein</molecule>
    <text>Produced by conventional translation.</text>
</comment>